<evidence type="ECO:0000250" key="1">
    <source>
        <dbReference type="UniProtKB" id="P0AEP9"/>
    </source>
</evidence>
<evidence type="ECO:0000255" key="2">
    <source>
        <dbReference type="PROSITE-ProRule" id="PRU00718"/>
    </source>
</evidence>
<evidence type="ECO:0000305" key="3"/>
<accession>P94535</accession>
<accession>Q795X0</accession>
<protein>
    <recommendedName>
        <fullName>Glycolate oxidase subunit GlcD</fullName>
        <ecNumber evidence="1">1.1.99.14</ecNumber>
    </recommendedName>
    <alternativeName>
        <fullName>Glycolate dehydrogenase subunit GlcD</fullName>
    </alternativeName>
</protein>
<reference key="1">
    <citation type="journal article" date="1996" name="Microbiology">
        <title>The dnaB-pheA (256 degrees-240 degrees) region of the Bacillus subtilis chromosome containing genes responsible for stress responses, the utilization of plant cell walls and primary metabolism.</title>
        <authorList>
            <person name="Wipat A."/>
            <person name="Carter N."/>
            <person name="Brignell C.S."/>
            <person name="Guy J.B."/>
            <person name="Piper K."/>
            <person name="Sanders J."/>
            <person name="Emmerson P.T."/>
            <person name="Harwood C.R."/>
        </authorList>
    </citation>
    <scope>NUCLEOTIDE SEQUENCE [GENOMIC DNA]</scope>
    <source>
        <strain>168</strain>
    </source>
</reference>
<reference key="2">
    <citation type="journal article" date="1997" name="Nature">
        <title>The complete genome sequence of the Gram-positive bacterium Bacillus subtilis.</title>
        <authorList>
            <person name="Kunst F."/>
            <person name="Ogasawara N."/>
            <person name="Moszer I."/>
            <person name="Albertini A.M."/>
            <person name="Alloni G."/>
            <person name="Azevedo V."/>
            <person name="Bertero M.G."/>
            <person name="Bessieres P."/>
            <person name="Bolotin A."/>
            <person name="Borchert S."/>
            <person name="Borriss R."/>
            <person name="Boursier L."/>
            <person name="Brans A."/>
            <person name="Braun M."/>
            <person name="Brignell S.C."/>
            <person name="Bron S."/>
            <person name="Brouillet S."/>
            <person name="Bruschi C.V."/>
            <person name="Caldwell B."/>
            <person name="Capuano V."/>
            <person name="Carter N.M."/>
            <person name="Choi S.-K."/>
            <person name="Codani J.-J."/>
            <person name="Connerton I.F."/>
            <person name="Cummings N.J."/>
            <person name="Daniel R.A."/>
            <person name="Denizot F."/>
            <person name="Devine K.M."/>
            <person name="Duesterhoeft A."/>
            <person name="Ehrlich S.D."/>
            <person name="Emmerson P.T."/>
            <person name="Entian K.-D."/>
            <person name="Errington J."/>
            <person name="Fabret C."/>
            <person name="Ferrari E."/>
            <person name="Foulger D."/>
            <person name="Fritz C."/>
            <person name="Fujita M."/>
            <person name="Fujita Y."/>
            <person name="Fuma S."/>
            <person name="Galizzi A."/>
            <person name="Galleron N."/>
            <person name="Ghim S.-Y."/>
            <person name="Glaser P."/>
            <person name="Goffeau A."/>
            <person name="Golightly E.J."/>
            <person name="Grandi G."/>
            <person name="Guiseppi G."/>
            <person name="Guy B.J."/>
            <person name="Haga K."/>
            <person name="Haiech J."/>
            <person name="Harwood C.R."/>
            <person name="Henaut A."/>
            <person name="Hilbert H."/>
            <person name="Holsappel S."/>
            <person name="Hosono S."/>
            <person name="Hullo M.-F."/>
            <person name="Itaya M."/>
            <person name="Jones L.-M."/>
            <person name="Joris B."/>
            <person name="Karamata D."/>
            <person name="Kasahara Y."/>
            <person name="Klaerr-Blanchard M."/>
            <person name="Klein C."/>
            <person name="Kobayashi Y."/>
            <person name="Koetter P."/>
            <person name="Koningstein G."/>
            <person name="Krogh S."/>
            <person name="Kumano M."/>
            <person name="Kurita K."/>
            <person name="Lapidus A."/>
            <person name="Lardinois S."/>
            <person name="Lauber J."/>
            <person name="Lazarevic V."/>
            <person name="Lee S.-M."/>
            <person name="Levine A."/>
            <person name="Liu H."/>
            <person name="Masuda S."/>
            <person name="Mauel C."/>
            <person name="Medigue C."/>
            <person name="Medina N."/>
            <person name="Mellado R.P."/>
            <person name="Mizuno M."/>
            <person name="Moestl D."/>
            <person name="Nakai S."/>
            <person name="Noback M."/>
            <person name="Noone D."/>
            <person name="O'Reilly M."/>
            <person name="Ogawa K."/>
            <person name="Ogiwara A."/>
            <person name="Oudega B."/>
            <person name="Park S.-H."/>
            <person name="Parro V."/>
            <person name="Pohl T.M."/>
            <person name="Portetelle D."/>
            <person name="Porwollik S."/>
            <person name="Prescott A.M."/>
            <person name="Presecan E."/>
            <person name="Pujic P."/>
            <person name="Purnelle B."/>
            <person name="Rapoport G."/>
            <person name="Rey M."/>
            <person name="Reynolds S."/>
            <person name="Rieger M."/>
            <person name="Rivolta C."/>
            <person name="Rocha E."/>
            <person name="Roche B."/>
            <person name="Rose M."/>
            <person name="Sadaie Y."/>
            <person name="Sato T."/>
            <person name="Scanlan E."/>
            <person name="Schleich S."/>
            <person name="Schroeter R."/>
            <person name="Scoffone F."/>
            <person name="Sekiguchi J."/>
            <person name="Sekowska A."/>
            <person name="Seror S.J."/>
            <person name="Serror P."/>
            <person name="Shin B.-S."/>
            <person name="Soldo B."/>
            <person name="Sorokin A."/>
            <person name="Tacconi E."/>
            <person name="Takagi T."/>
            <person name="Takahashi H."/>
            <person name="Takemaru K."/>
            <person name="Takeuchi M."/>
            <person name="Tamakoshi A."/>
            <person name="Tanaka T."/>
            <person name="Terpstra P."/>
            <person name="Tognoni A."/>
            <person name="Tosato V."/>
            <person name="Uchiyama S."/>
            <person name="Vandenbol M."/>
            <person name="Vannier F."/>
            <person name="Vassarotti A."/>
            <person name="Viari A."/>
            <person name="Wambutt R."/>
            <person name="Wedler E."/>
            <person name="Wedler H."/>
            <person name="Weitzenegger T."/>
            <person name="Winters P."/>
            <person name="Wipat A."/>
            <person name="Yamamoto H."/>
            <person name="Yamane K."/>
            <person name="Yasumoto K."/>
            <person name="Yata K."/>
            <person name="Yoshida K."/>
            <person name="Yoshikawa H.-F."/>
            <person name="Zumstein E."/>
            <person name="Yoshikawa H."/>
            <person name="Danchin A."/>
        </authorList>
    </citation>
    <scope>NUCLEOTIDE SEQUENCE [LARGE SCALE GENOMIC DNA]</scope>
    <source>
        <strain>168</strain>
    </source>
</reference>
<name>GLCD_BACSU</name>
<proteinExistence type="inferred from homology"/>
<comment type="function">
    <text evidence="1">Component of a complex that catalyzes the oxidation of glycolate to glyoxylate. Is also able to oxidize D-lactate ((R)-lactate). Does not link directly to O(2), and 2,6-dichloroindophenol (DCIP) and phenazine methosulfate (PMS) can act as artificial electron acceptors in vitro, but the physiological molecule that functions as primary electron acceptor during glycolate oxidation is unknown.</text>
</comment>
<comment type="catalytic activity">
    <reaction evidence="1">
        <text>glycolate + A = glyoxylate + AH2</text>
        <dbReference type="Rhea" id="RHEA:21264"/>
        <dbReference type="ChEBI" id="CHEBI:13193"/>
        <dbReference type="ChEBI" id="CHEBI:17499"/>
        <dbReference type="ChEBI" id="CHEBI:29805"/>
        <dbReference type="ChEBI" id="CHEBI:36655"/>
        <dbReference type="EC" id="1.1.99.14"/>
    </reaction>
</comment>
<comment type="catalytic activity">
    <reaction evidence="1">
        <text>(R)-lactate + A = pyruvate + AH2</text>
        <dbReference type="Rhea" id="RHEA:15089"/>
        <dbReference type="ChEBI" id="CHEBI:13193"/>
        <dbReference type="ChEBI" id="CHEBI:15361"/>
        <dbReference type="ChEBI" id="CHEBI:16004"/>
        <dbReference type="ChEBI" id="CHEBI:17499"/>
    </reaction>
</comment>
<comment type="cofactor">
    <cofactor evidence="3">
        <name>FAD</name>
        <dbReference type="ChEBI" id="CHEBI:57692"/>
    </cofactor>
</comment>
<comment type="subunit">
    <text evidence="3">The glycolate oxidase likely consists of several subunits including GlcD and GlcF.</text>
</comment>
<comment type="subcellular location">
    <subcellularLocation>
        <location evidence="1">Cell membrane</location>
    </subcellularLocation>
</comment>
<comment type="similarity">
    <text evidence="3">Belongs to the FAD-binding oxidoreductase/transferase type 4 family.</text>
</comment>
<keyword id="KW-1003">Cell membrane</keyword>
<keyword id="KW-0274">FAD</keyword>
<keyword id="KW-0285">Flavoprotein</keyword>
<keyword id="KW-0472">Membrane</keyword>
<keyword id="KW-0560">Oxidoreductase</keyword>
<keyword id="KW-1185">Reference proteome</keyword>
<feature type="chain" id="PRO_0000360827" description="Glycolate oxidase subunit GlcD">
    <location>
        <begin position="1"/>
        <end position="470"/>
    </location>
</feature>
<feature type="domain" description="FAD-binding PCMH-type" evidence="2">
    <location>
        <begin position="37"/>
        <end position="216"/>
    </location>
</feature>
<sequence length="470" mass="50936">MITKDVKEQLIQVSGPENFDDSNAGRLVYSYDATPQYQSMPDAVIAPRNTDEISRILTICSEHRVPIVPRGSGTNLCGGTCPTEGGLVLLFKHMNQILEIDEENLTATVQPGVITLDMIRAVESKGLFYPPDPSSMKISTIGGNINENSGGLRGLKYGVTRDYVIGLEVVLANGDIIRTGGKLAKDVAGYDLTRLFVGSEGTLGIVTEAIVKLVPKPETKKTLLALYENIDAAAQTVSDIIAAKIIPATLEFLDQPTLLVIEDYAKIGLPTSAKAVLLIEQDGPFETVERDMEKIEAICKKGDAVSVQTAQTEEEAFALTEARRSALSALARLKPTTILEDATVPRSEIANMVKAINDIAAKYDISICTFGHAGDGNLHPTCTTDIRNKDEMERVEQAFAEIFEKAIELGGTITGEHGVGEMKAPYLEMKLKKEGIDAMKALKAAFDPRNILNPGKMFAKDARKRVVAER</sequence>
<gene>
    <name type="primary">glcD</name>
    <name type="synonym">ysfC</name>
    <name type="ordered locus">BSU28680</name>
</gene>
<organism>
    <name type="scientific">Bacillus subtilis (strain 168)</name>
    <dbReference type="NCBI Taxonomy" id="224308"/>
    <lineage>
        <taxon>Bacteria</taxon>
        <taxon>Bacillati</taxon>
        <taxon>Bacillota</taxon>
        <taxon>Bacilli</taxon>
        <taxon>Bacillales</taxon>
        <taxon>Bacillaceae</taxon>
        <taxon>Bacillus</taxon>
    </lineage>
</organism>
<dbReference type="EC" id="1.1.99.14" evidence="1"/>
<dbReference type="EMBL" id="Z75208">
    <property type="protein sequence ID" value="CAA99599.1"/>
    <property type="molecule type" value="Genomic_DNA"/>
</dbReference>
<dbReference type="EMBL" id="AL009126">
    <property type="protein sequence ID" value="CAB14828.1"/>
    <property type="molecule type" value="Genomic_DNA"/>
</dbReference>
<dbReference type="PIR" id="D69984">
    <property type="entry name" value="D69984"/>
</dbReference>
<dbReference type="RefSeq" id="NP_390746.1">
    <property type="nucleotide sequence ID" value="NC_000964.3"/>
</dbReference>
<dbReference type="RefSeq" id="WP_004398865.1">
    <property type="nucleotide sequence ID" value="NZ_OZ025638.1"/>
</dbReference>
<dbReference type="SMR" id="P94535"/>
<dbReference type="FunCoup" id="P94535">
    <property type="interactions" value="571"/>
</dbReference>
<dbReference type="STRING" id="224308.BSU28680"/>
<dbReference type="jPOST" id="P94535"/>
<dbReference type="PaxDb" id="224308-BSU28680"/>
<dbReference type="EnsemblBacteria" id="CAB14828">
    <property type="protein sequence ID" value="CAB14828"/>
    <property type="gene ID" value="BSU_28680"/>
</dbReference>
<dbReference type="GeneID" id="937770"/>
<dbReference type="KEGG" id="bsu:BSU28680"/>
<dbReference type="PATRIC" id="fig|224308.179.peg.3116"/>
<dbReference type="eggNOG" id="COG0277">
    <property type="taxonomic scope" value="Bacteria"/>
</dbReference>
<dbReference type="InParanoid" id="P94535"/>
<dbReference type="OrthoDB" id="9767256at2"/>
<dbReference type="PhylomeDB" id="P94535"/>
<dbReference type="BioCyc" id="BSUB:BSU28680-MONOMER"/>
<dbReference type="Proteomes" id="UP000001570">
    <property type="component" value="Chromosome"/>
</dbReference>
<dbReference type="GO" id="GO:0009339">
    <property type="term" value="C:glycolate oxidase complex"/>
    <property type="evidence" value="ECO:0007669"/>
    <property type="project" value="InterPro"/>
</dbReference>
<dbReference type="GO" id="GO:0005886">
    <property type="term" value="C:plasma membrane"/>
    <property type="evidence" value="ECO:0007669"/>
    <property type="project" value="UniProtKB-SubCell"/>
</dbReference>
<dbReference type="GO" id="GO:0003973">
    <property type="term" value="F:(S)-2-hydroxy-acid oxidase activity"/>
    <property type="evidence" value="ECO:0007669"/>
    <property type="project" value="InterPro"/>
</dbReference>
<dbReference type="GO" id="GO:0047809">
    <property type="term" value="F:D-2-hydroxy-acid dehydrogenase activity"/>
    <property type="evidence" value="ECO:0007669"/>
    <property type="project" value="RHEA"/>
</dbReference>
<dbReference type="GO" id="GO:0071949">
    <property type="term" value="F:FAD binding"/>
    <property type="evidence" value="ECO:0007669"/>
    <property type="project" value="InterPro"/>
</dbReference>
<dbReference type="GO" id="GO:0019154">
    <property type="term" value="F:glycolate dehydrogenase activity"/>
    <property type="evidence" value="ECO:0007669"/>
    <property type="project" value="UniProtKB-EC"/>
</dbReference>
<dbReference type="FunFam" id="1.10.45.10:FF:000001">
    <property type="entry name" value="D-lactate dehydrogenase mitochondrial"/>
    <property type="match status" value="1"/>
</dbReference>
<dbReference type="FunFam" id="3.30.70.2740:FF:000001">
    <property type="entry name" value="D-lactate dehydrogenase mitochondrial"/>
    <property type="match status" value="1"/>
</dbReference>
<dbReference type="Gene3D" id="3.30.465.10">
    <property type="match status" value="1"/>
</dbReference>
<dbReference type="Gene3D" id="3.30.70.2740">
    <property type="match status" value="1"/>
</dbReference>
<dbReference type="Gene3D" id="1.10.45.10">
    <property type="entry name" value="Vanillyl-alcohol Oxidase, Chain A, domain 4"/>
    <property type="match status" value="1"/>
</dbReference>
<dbReference type="InterPro" id="IPR004113">
    <property type="entry name" value="FAD-bd_oxidored_4_C"/>
</dbReference>
<dbReference type="InterPro" id="IPR016166">
    <property type="entry name" value="FAD-bd_PCMH"/>
</dbReference>
<dbReference type="InterPro" id="IPR036318">
    <property type="entry name" value="FAD-bd_PCMH-like_sf"/>
</dbReference>
<dbReference type="InterPro" id="IPR016169">
    <property type="entry name" value="FAD-bd_PCMH_sub2"/>
</dbReference>
<dbReference type="InterPro" id="IPR016164">
    <property type="entry name" value="FAD-linked_Oxase-like_C"/>
</dbReference>
<dbReference type="InterPro" id="IPR051914">
    <property type="entry name" value="FAD-linked_OxidoTrans_Type4"/>
</dbReference>
<dbReference type="InterPro" id="IPR004490">
    <property type="entry name" value="GlcD"/>
</dbReference>
<dbReference type="InterPro" id="IPR006094">
    <property type="entry name" value="Oxid_FAD_bind_N"/>
</dbReference>
<dbReference type="InterPro" id="IPR016171">
    <property type="entry name" value="Vanillyl_alc_oxidase_C-sub2"/>
</dbReference>
<dbReference type="NCBIfam" id="TIGR00387">
    <property type="entry name" value="glcD"/>
    <property type="match status" value="1"/>
</dbReference>
<dbReference type="PANTHER" id="PTHR42934">
    <property type="entry name" value="GLYCOLATE OXIDASE SUBUNIT GLCD"/>
    <property type="match status" value="1"/>
</dbReference>
<dbReference type="PANTHER" id="PTHR42934:SF2">
    <property type="entry name" value="GLYCOLATE OXIDASE SUBUNIT GLCD"/>
    <property type="match status" value="1"/>
</dbReference>
<dbReference type="Pfam" id="PF02913">
    <property type="entry name" value="FAD-oxidase_C"/>
    <property type="match status" value="1"/>
</dbReference>
<dbReference type="Pfam" id="PF01565">
    <property type="entry name" value="FAD_binding_4"/>
    <property type="match status" value="1"/>
</dbReference>
<dbReference type="SUPFAM" id="SSF56176">
    <property type="entry name" value="FAD-binding/transporter-associated domain-like"/>
    <property type="match status" value="1"/>
</dbReference>
<dbReference type="SUPFAM" id="SSF55103">
    <property type="entry name" value="FAD-linked oxidases, C-terminal domain"/>
    <property type="match status" value="1"/>
</dbReference>
<dbReference type="PROSITE" id="PS51387">
    <property type="entry name" value="FAD_PCMH"/>
    <property type="match status" value="1"/>
</dbReference>